<evidence type="ECO:0000255" key="1">
    <source>
        <dbReference type="HAMAP-Rule" id="MF_03158"/>
    </source>
</evidence>
<evidence type="ECO:0000256" key="2">
    <source>
        <dbReference type="SAM" id="MobiDB-lite"/>
    </source>
</evidence>
<evidence type="ECO:0000269" key="3">
    <source>
    </source>
</evidence>
<feature type="chain" id="PRO_0000034057" description="Thiamine thiazole synthase">
    <location>
        <begin position="1"/>
        <end position="338"/>
    </location>
</feature>
<feature type="region of interest" description="Disordered" evidence="2">
    <location>
        <begin position="1"/>
        <end position="43"/>
    </location>
</feature>
<feature type="compositionally biased region" description="Polar residues" evidence="2">
    <location>
        <begin position="11"/>
        <end position="21"/>
    </location>
</feature>
<feature type="binding site" evidence="1">
    <location>
        <position position="91"/>
    </location>
    <ligand>
        <name>substrate</name>
    </ligand>
</feature>
<feature type="binding site" evidence="1">
    <location>
        <begin position="112"/>
        <end position="113"/>
    </location>
    <ligand>
        <name>substrate</name>
    </ligand>
</feature>
<feature type="binding site" evidence="1">
    <location>
        <position position="120"/>
    </location>
    <ligand>
        <name>substrate</name>
    </ligand>
</feature>
<feature type="binding site" evidence="1">
    <location>
        <position position="185"/>
    </location>
    <ligand>
        <name>substrate</name>
    </ligand>
</feature>
<feature type="binding site" evidence="1">
    <location>
        <position position="223"/>
    </location>
    <ligand>
        <name>substrate</name>
    </ligand>
</feature>
<feature type="binding site" evidence="1">
    <location>
        <position position="238"/>
    </location>
    <ligand>
        <name>substrate</name>
    </ligand>
</feature>
<feature type="binding site" evidence="1">
    <location>
        <position position="290"/>
    </location>
    <ligand>
        <name>substrate</name>
    </ligand>
</feature>
<feature type="binding site" evidence="1">
    <location>
        <begin position="300"/>
        <end position="302"/>
    </location>
    <ligand>
        <name>substrate</name>
    </ligand>
</feature>
<feature type="modified residue" description="2,3-didehydroalanine (Cys)" evidence="1">
    <location>
        <position position="221"/>
    </location>
</feature>
<sequence>MSPVATESMYKPTTINQTAHQQAMDPLKSKQQSNATVNKPAFKPEPAVNLTPIKFAPIKEHQVQRAMVRRYFQDMEERAISDVIIVGAGSAGLSCAYALGTARPDLKITILESNVAPGGGCWLGGQLMSAMVCRKPADEFLDQVGVPYEDEGNFVVVKHAALFTSTVLSKVLAMPNVKMFNATACEDLIIKPCPINPGVQRIAGCVTNWTLVSLNHDHQSCMDPSTITAPLVCSFAGHDGPFGAFCVKRVASAGLSEGLGDMRPLDMERAEDHIANKTREILPGLIVGGMELSEFDGSARMGPTFGAMLLSGKRAAEVALQSLDRVKIEEGEVVGLAK</sequence>
<protein>
    <recommendedName>
        <fullName evidence="1">Thiamine thiazole synthase</fullName>
        <ecNumber evidence="1">2.4.2.60</ecNumber>
    </recommendedName>
    <alternativeName>
        <fullName>Planta-induced protein 4</fullName>
    </alternativeName>
    <alternativeName>
        <fullName evidence="1">Thiazole biosynthetic enzyme</fullName>
    </alternativeName>
</protein>
<gene>
    <name type="primary">THI2</name>
    <name type="synonym">PIG4</name>
</gene>
<dbReference type="EC" id="2.4.2.60" evidence="1"/>
<dbReference type="EMBL" id="AJ250427">
    <property type="protein sequence ID" value="CAB59856.1"/>
    <property type="molecule type" value="Genomic_DNA"/>
</dbReference>
<dbReference type="SMR" id="Q9UVF8"/>
<dbReference type="GO" id="GO:0005829">
    <property type="term" value="C:cytosol"/>
    <property type="evidence" value="ECO:0007669"/>
    <property type="project" value="UniProtKB-UniRule"/>
</dbReference>
<dbReference type="GO" id="GO:0005634">
    <property type="term" value="C:nucleus"/>
    <property type="evidence" value="ECO:0007669"/>
    <property type="project" value="UniProtKB-SubCell"/>
</dbReference>
<dbReference type="GO" id="GO:0160205">
    <property type="term" value="F:cysteine-dependent adenosine diphosphate thiazole synthase activity"/>
    <property type="evidence" value="ECO:0007669"/>
    <property type="project" value="UniProtKB-EC"/>
</dbReference>
<dbReference type="GO" id="GO:0005506">
    <property type="term" value="F:iron ion binding"/>
    <property type="evidence" value="ECO:0007669"/>
    <property type="project" value="UniProtKB-UniRule"/>
</dbReference>
<dbReference type="GO" id="GO:0009228">
    <property type="term" value="P:thiamine biosynthetic process"/>
    <property type="evidence" value="ECO:0007669"/>
    <property type="project" value="UniProtKB-UniRule"/>
</dbReference>
<dbReference type="GO" id="GO:0052837">
    <property type="term" value="P:thiazole biosynthetic process"/>
    <property type="evidence" value="ECO:0007669"/>
    <property type="project" value="UniProtKB-UniRule"/>
</dbReference>
<dbReference type="Gene3D" id="6.10.250.2840">
    <property type="match status" value="1"/>
</dbReference>
<dbReference type="Gene3D" id="3.50.50.60">
    <property type="entry name" value="FAD/NAD(P)-binding domain"/>
    <property type="match status" value="1"/>
</dbReference>
<dbReference type="HAMAP" id="MF_03158">
    <property type="entry name" value="THI4"/>
    <property type="match status" value="1"/>
</dbReference>
<dbReference type="InterPro" id="IPR036188">
    <property type="entry name" value="FAD/NAD-bd_sf"/>
</dbReference>
<dbReference type="InterPro" id="IPR027495">
    <property type="entry name" value="Sti35"/>
</dbReference>
<dbReference type="InterPro" id="IPR002922">
    <property type="entry name" value="Thi4_fam"/>
</dbReference>
<dbReference type="NCBIfam" id="TIGR00292">
    <property type="entry name" value="sulfide-dependent adenosine diphosphate thiazole synthase"/>
    <property type="match status" value="1"/>
</dbReference>
<dbReference type="PANTHER" id="PTHR43422">
    <property type="entry name" value="THIAMINE THIAZOLE SYNTHASE"/>
    <property type="match status" value="1"/>
</dbReference>
<dbReference type="PANTHER" id="PTHR43422:SF3">
    <property type="entry name" value="THIAMINE THIAZOLE SYNTHASE"/>
    <property type="match status" value="1"/>
</dbReference>
<dbReference type="Pfam" id="PF01946">
    <property type="entry name" value="Thi4"/>
    <property type="match status" value="1"/>
</dbReference>
<dbReference type="SUPFAM" id="SSF51905">
    <property type="entry name" value="FAD/NAD(P)-binding domain"/>
    <property type="match status" value="1"/>
</dbReference>
<comment type="function">
    <text evidence="1 3">Involved in biosynthesis of the thiamine precursor thiazole. Catalyzes the conversion of NAD and glycine to adenosine diphosphate 5-(2-hydroxyethyl)-4-methylthiazole-2-carboxylic acid (ADT), an adenylated thiazole intermediate. The reaction includes an iron-dependent sulfide transfer from a conserved cysteine residue of the protein to a thiazole intermediate. The enzyme can only undergo a single turnover, which suggests it is a suicide enzyme. May have additional roles in adaptation to various stress conditions and in DNA damage tolerance.</text>
</comment>
<comment type="catalytic activity">
    <reaction evidence="1">
        <text>[ADP-thiazole synthase]-L-cysteine + glycine + NAD(+) = [ADP-thiazole synthase]-dehydroalanine + ADP-5-ethyl-4-methylthiazole-2-carboxylate + nicotinamide + 3 H2O + 2 H(+)</text>
        <dbReference type="Rhea" id="RHEA:55708"/>
        <dbReference type="Rhea" id="RHEA-COMP:14264"/>
        <dbReference type="Rhea" id="RHEA-COMP:14265"/>
        <dbReference type="ChEBI" id="CHEBI:15377"/>
        <dbReference type="ChEBI" id="CHEBI:15378"/>
        <dbReference type="ChEBI" id="CHEBI:17154"/>
        <dbReference type="ChEBI" id="CHEBI:29950"/>
        <dbReference type="ChEBI" id="CHEBI:57305"/>
        <dbReference type="ChEBI" id="CHEBI:57540"/>
        <dbReference type="ChEBI" id="CHEBI:90873"/>
        <dbReference type="ChEBI" id="CHEBI:139151"/>
        <dbReference type="EC" id="2.4.2.60"/>
    </reaction>
</comment>
<comment type="cofactor">
    <cofactor evidence="1">
        <name>Fe cation</name>
        <dbReference type="ChEBI" id="CHEBI:24875"/>
    </cofactor>
    <text evidence="1">Binds 1 Fe cation per subunit.</text>
</comment>
<comment type="subunit">
    <text evidence="1">Homooctamer.</text>
</comment>
<comment type="subcellular location">
    <subcellularLocation>
        <location evidence="1">Cytoplasm</location>
    </subcellularLocation>
    <subcellularLocation>
        <location evidence="1">Nucleus</location>
    </subcellularLocation>
</comment>
<comment type="tissue specificity">
    <text evidence="3">Highly expressed in haustoria, and only in low amounts in intercellular hyphae. Found in the basal hyphae of the uredia, but not in the pedicels and only at very low levels in uredospores.</text>
</comment>
<comment type="PTM">
    <text evidence="1">During the catalytic reaction, a sulfide is transferred from Cys-221 to a reaction intermediate, generating a dehydroalanine residue.</text>
</comment>
<comment type="similarity">
    <text evidence="1">Belongs to the THI4 family.</text>
</comment>
<accession>Q9UVF8</accession>
<proteinExistence type="evidence at transcript level"/>
<organism>
    <name type="scientific">Uromyces fabae</name>
    <name type="common">Rust fungus</name>
    <dbReference type="NCBI Taxonomy" id="55588"/>
    <lineage>
        <taxon>Eukaryota</taxon>
        <taxon>Fungi</taxon>
        <taxon>Dikarya</taxon>
        <taxon>Basidiomycota</taxon>
        <taxon>Pucciniomycotina</taxon>
        <taxon>Pucciniomycetes</taxon>
        <taxon>Pucciniales</taxon>
        <taxon>Pucciniaceae</taxon>
        <taxon>Uromyces</taxon>
    </lineage>
</organism>
<reference key="1">
    <citation type="journal article" date="2000" name="Mol. Plant Microbe Interact.">
        <title>High level activation of vitamin B1 biosynthesis genes in haustoria of the rust fungus Uromyces fabae.</title>
        <authorList>
            <person name="Sohn J."/>
            <person name="Voegele R.T."/>
            <person name="Mendgen K."/>
            <person name="Hahn M."/>
        </authorList>
    </citation>
    <scope>NUCLEOTIDE SEQUENCE [GENOMIC DNA]</scope>
    <scope>FUNCTION</scope>
    <scope>TISSUE SPECIFICITY</scope>
</reference>
<keyword id="KW-0963">Cytoplasm</keyword>
<keyword id="KW-0408">Iron</keyword>
<keyword id="KW-0479">Metal-binding</keyword>
<keyword id="KW-0520">NAD</keyword>
<keyword id="KW-0539">Nucleus</keyword>
<keyword id="KW-0784">Thiamine biosynthesis</keyword>
<keyword id="KW-0808">Transferase</keyword>
<name>THI4_UROFA</name>